<gene>
    <name type="primary">CLINT1</name>
    <name type="synonym">EPN4</name>
</gene>
<dbReference type="EMBL" id="BC153233">
    <property type="protein sequence ID" value="AAI53234.1"/>
    <property type="molecule type" value="mRNA"/>
</dbReference>
<dbReference type="RefSeq" id="NP_001098887.1">
    <property type="nucleotide sequence ID" value="NM_001105417.1"/>
</dbReference>
<dbReference type="SMR" id="A7Z035"/>
<dbReference type="FunCoup" id="A7Z035">
    <property type="interactions" value="2507"/>
</dbReference>
<dbReference type="STRING" id="9913.ENSBTAP00000021559"/>
<dbReference type="PaxDb" id="9913-ENSBTAP00000021559"/>
<dbReference type="PeptideAtlas" id="A7Z035"/>
<dbReference type="Ensembl" id="ENSBTAT00000021559.5">
    <property type="protein sequence ID" value="ENSBTAP00000021559.4"/>
    <property type="gene ID" value="ENSBTAG00000016199.6"/>
</dbReference>
<dbReference type="GeneID" id="538540"/>
<dbReference type="KEGG" id="bta:538540"/>
<dbReference type="CTD" id="9685"/>
<dbReference type="VEuPathDB" id="HostDB:ENSBTAG00000016199"/>
<dbReference type="VGNC" id="VGNC:27443">
    <property type="gene designation" value="CLINT1"/>
</dbReference>
<dbReference type="eggNOG" id="KOG2057">
    <property type="taxonomic scope" value="Eukaryota"/>
</dbReference>
<dbReference type="GeneTree" id="ENSGT00940000155650"/>
<dbReference type="HOGENOM" id="CLU_032178_1_0_1"/>
<dbReference type="InParanoid" id="A7Z035"/>
<dbReference type="OMA" id="QTSMAQP"/>
<dbReference type="OrthoDB" id="4033880at2759"/>
<dbReference type="TreeFam" id="TF313361"/>
<dbReference type="Proteomes" id="UP000009136">
    <property type="component" value="Chromosome 7"/>
</dbReference>
<dbReference type="Bgee" id="ENSBTAG00000016199">
    <property type="expression patterns" value="Expressed in abomasum and 105 other cell types or tissues"/>
</dbReference>
<dbReference type="GO" id="GO:0030125">
    <property type="term" value="C:clathrin vesicle coat"/>
    <property type="evidence" value="ECO:0000318"/>
    <property type="project" value="GO_Central"/>
</dbReference>
<dbReference type="GO" id="GO:0005768">
    <property type="term" value="C:endosome"/>
    <property type="evidence" value="ECO:0000318"/>
    <property type="project" value="GO_Central"/>
</dbReference>
<dbReference type="GO" id="GO:0005798">
    <property type="term" value="C:Golgi-associated vesicle"/>
    <property type="evidence" value="ECO:0000304"/>
    <property type="project" value="BHF-UCL"/>
</dbReference>
<dbReference type="GO" id="GO:0005654">
    <property type="term" value="C:nucleoplasm"/>
    <property type="evidence" value="ECO:0007669"/>
    <property type="project" value="Ensembl"/>
</dbReference>
<dbReference type="GO" id="GO:0048471">
    <property type="term" value="C:perinuclear region of cytoplasm"/>
    <property type="evidence" value="ECO:0000314"/>
    <property type="project" value="BHF-UCL"/>
</dbReference>
<dbReference type="GO" id="GO:0005886">
    <property type="term" value="C:plasma membrane"/>
    <property type="evidence" value="ECO:0000318"/>
    <property type="project" value="GO_Central"/>
</dbReference>
<dbReference type="GO" id="GO:0005802">
    <property type="term" value="C:trans-Golgi network"/>
    <property type="evidence" value="ECO:0000304"/>
    <property type="project" value="BHF-UCL"/>
</dbReference>
<dbReference type="GO" id="GO:0030276">
    <property type="term" value="F:clathrin binding"/>
    <property type="evidence" value="ECO:0000318"/>
    <property type="project" value="GO_Central"/>
</dbReference>
<dbReference type="GO" id="GO:0005543">
    <property type="term" value="F:phospholipid binding"/>
    <property type="evidence" value="ECO:0000318"/>
    <property type="project" value="GO_Central"/>
</dbReference>
<dbReference type="GO" id="GO:0006897">
    <property type="term" value="P:endocytosis"/>
    <property type="evidence" value="ECO:0000318"/>
    <property type="project" value="GO_Central"/>
</dbReference>
<dbReference type="CDD" id="cd16989">
    <property type="entry name" value="ENTH_EpsinR"/>
    <property type="match status" value="1"/>
</dbReference>
<dbReference type="FunFam" id="1.25.40.90:FF:000006">
    <property type="entry name" value="Clathrin interactor 1"/>
    <property type="match status" value="1"/>
</dbReference>
<dbReference type="Gene3D" id="1.25.40.90">
    <property type="match status" value="1"/>
</dbReference>
<dbReference type="InterPro" id="IPR013809">
    <property type="entry name" value="ENTH"/>
</dbReference>
<dbReference type="InterPro" id="IPR008942">
    <property type="entry name" value="ENTH_VHS"/>
</dbReference>
<dbReference type="PANTHER" id="PTHR12276:SF45">
    <property type="entry name" value="CLATHRIN INTERACTOR 1"/>
    <property type="match status" value="1"/>
</dbReference>
<dbReference type="PANTHER" id="PTHR12276">
    <property type="entry name" value="EPSIN/ENT-RELATED"/>
    <property type="match status" value="1"/>
</dbReference>
<dbReference type="Pfam" id="PF01417">
    <property type="entry name" value="ENTH"/>
    <property type="match status" value="1"/>
</dbReference>
<dbReference type="SMART" id="SM00273">
    <property type="entry name" value="ENTH"/>
    <property type="match status" value="1"/>
</dbReference>
<dbReference type="SUPFAM" id="SSF48464">
    <property type="entry name" value="ENTH/VHS domain"/>
    <property type="match status" value="1"/>
</dbReference>
<dbReference type="PROSITE" id="PS50942">
    <property type="entry name" value="ENTH"/>
    <property type="match status" value="1"/>
</dbReference>
<protein>
    <recommendedName>
        <fullName>Clathrin interactor 1</fullName>
    </recommendedName>
    <alternativeName>
        <fullName>Epsin-4</fullName>
    </alternativeName>
</protein>
<accession>A7Z035</accession>
<reference key="1">
    <citation type="submission" date="2007-09" db="EMBL/GenBank/DDBJ databases">
        <authorList>
            <consortium name="NIH - Mammalian Gene Collection (MGC) project"/>
        </authorList>
    </citation>
    <scope>NUCLEOTIDE SEQUENCE [LARGE SCALE MRNA]</scope>
    <source>
        <strain>Hereford</strain>
        <tissue>Basal ganglia</tissue>
    </source>
</reference>
<keyword id="KW-0963">Cytoplasm</keyword>
<keyword id="KW-0968">Cytoplasmic vesicle</keyword>
<keyword id="KW-0254">Endocytosis</keyword>
<keyword id="KW-0446">Lipid-binding</keyword>
<keyword id="KW-0472">Membrane</keyword>
<keyword id="KW-0597">Phosphoprotein</keyword>
<keyword id="KW-1185">Reference proteome</keyword>
<organism>
    <name type="scientific">Bos taurus</name>
    <name type="common">Bovine</name>
    <dbReference type="NCBI Taxonomy" id="9913"/>
    <lineage>
        <taxon>Eukaryota</taxon>
        <taxon>Metazoa</taxon>
        <taxon>Chordata</taxon>
        <taxon>Craniata</taxon>
        <taxon>Vertebrata</taxon>
        <taxon>Euteleostomi</taxon>
        <taxon>Mammalia</taxon>
        <taxon>Eutheria</taxon>
        <taxon>Laurasiatheria</taxon>
        <taxon>Artiodactyla</taxon>
        <taxon>Ruminantia</taxon>
        <taxon>Pecora</taxon>
        <taxon>Bovidae</taxon>
        <taxon>Bovinae</taxon>
        <taxon>Bos</taxon>
    </lineage>
</organism>
<evidence type="ECO:0000250" key="1"/>
<evidence type="ECO:0000250" key="2">
    <source>
        <dbReference type="UniProtKB" id="Q14677"/>
    </source>
</evidence>
<evidence type="ECO:0000250" key="3">
    <source>
        <dbReference type="UniProtKB" id="Q99KN9"/>
    </source>
</evidence>
<evidence type="ECO:0000255" key="4">
    <source>
        <dbReference type="PROSITE-ProRule" id="PRU00243"/>
    </source>
</evidence>
<evidence type="ECO:0000256" key="5">
    <source>
        <dbReference type="SAM" id="MobiDB-lite"/>
    </source>
</evidence>
<evidence type="ECO:0000305" key="6"/>
<comment type="function">
    <text evidence="1">Binds to membranes enriched in phosphatidylinositol 4,5-bisphosphate (PtdIns(4,5)P2). May have a role in transport via clathrin-coated vesicles from the trans-Golgi network to endosomes. Stimulates clathrin assembly (By similarity).</text>
</comment>
<comment type="subunit">
    <text evidence="2">Binds clathrin heavy chain and AP-2 (By similarity). Interacts with VTI1B (By similarity). Interacts with GGA2 (via GAE domain) (By similarity). Interacts with AP1G1 (via GAE domain) (By similarity). Interacts with AP1G2 (via GAE domain) (By similarity).</text>
</comment>
<comment type="subcellular location">
    <subcellularLocation>
        <location evidence="1">Cytoplasm</location>
    </subcellularLocation>
    <subcellularLocation>
        <location evidence="1">Cytoplasm</location>
        <location evidence="1">Perinuclear region</location>
    </subcellularLocation>
    <subcellularLocation>
        <location evidence="4">Membrane</location>
        <topology evidence="1">Peripheral membrane protein</topology>
    </subcellularLocation>
    <subcellularLocation>
        <location evidence="1">Cytoplasmic vesicle</location>
        <location evidence="1">Clathrin-coated vesicle</location>
    </subcellularLocation>
    <text evidence="1">Found throughout the cell, with the exception of the cell surface. Concentrated in the perinuclear region and associated with clathrin-coated vesicles close to the trans-Golgi network (By similarity).</text>
</comment>
<comment type="similarity">
    <text evidence="6">Belongs to the epsin family.</text>
</comment>
<name>EPN4_BOVIN</name>
<proteinExistence type="evidence at transcript level"/>
<feature type="chain" id="PRO_0000328493" description="Clathrin interactor 1">
    <location>
        <begin position="1"/>
        <end position="643"/>
    </location>
</feature>
<feature type="domain" description="ENTH" evidence="4">
    <location>
        <begin position="16"/>
        <end position="149"/>
    </location>
</feature>
<feature type="region of interest" description="Interaction with VTI1B" evidence="2">
    <location>
        <begin position="52"/>
        <end position="54"/>
    </location>
</feature>
<feature type="region of interest" description="Interaction with VTI1B" evidence="2">
    <location>
        <begin position="94"/>
        <end position="96"/>
    </location>
</feature>
<feature type="region of interest" description="Interaction with VTI1B" evidence="2">
    <location>
        <begin position="142"/>
        <end position="153"/>
    </location>
</feature>
<feature type="region of interest" description="Disordered" evidence="5">
    <location>
        <begin position="219"/>
        <end position="331"/>
    </location>
</feature>
<feature type="compositionally biased region" description="Basic and acidic residues" evidence="5">
    <location>
        <begin position="222"/>
        <end position="239"/>
    </location>
</feature>
<feature type="compositionally biased region" description="Polar residues" evidence="5">
    <location>
        <begin position="300"/>
        <end position="310"/>
    </location>
</feature>
<feature type="compositionally biased region" description="Low complexity" evidence="5">
    <location>
        <begin position="311"/>
        <end position="323"/>
    </location>
</feature>
<feature type="binding site" evidence="1">
    <location>
        <position position="29"/>
    </location>
    <ligand>
        <name>a 1,2-diacyl-sn-glycero-3-phospho-(1D-myo-inositol-4,5-bisphosphate)</name>
        <dbReference type="ChEBI" id="CHEBI:58456"/>
    </ligand>
</feature>
<feature type="binding site" evidence="1">
    <location>
        <position position="67"/>
    </location>
    <ligand>
        <name>a 1,2-diacyl-sn-glycero-3-phospho-(1D-myo-inositol-4,5-bisphosphate)</name>
        <dbReference type="ChEBI" id="CHEBI:58456"/>
    </ligand>
</feature>
<feature type="modified residue" description="Phosphoserine" evidence="3">
    <location>
        <position position="163"/>
    </location>
</feature>
<feature type="modified residue" description="Phosphoserine" evidence="2">
    <location>
        <position position="166"/>
    </location>
</feature>
<feature type="modified residue" description="Phosphoserine" evidence="2">
    <location>
        <position position="173"/>
    </location>
</feature>
<feature type="modified residue" description="Phosphoserine" evidence="3">
    <location>
        <position position="205"/>
    </location>
</feature>
<feature type="modified residue" description="Phosphoserine" evidence="2">
    <location>
        <position position="210"/>
    </location>
</feature>
<feature type="modified residue" description="Phosphoserine" evidence="2">
    <location>
        <position position="227"/>
    </location>
</feature>
<feature type="modified residue" description="Phosphoserine" evidence="2">
    <location>
        <position position="245"/>
    </location>
</feature>
<feature type="modified residue" description="Phosphoserine" evidence="2">
    <location>
        <position position="299"/>
    </location>
</feature>
<feature type="modified residue" description="Phosphothreonine" evidence="2">
    <location>
        <position position="308"/>
    </location>
</feature>
<feature type="modified residue" description="Phosphoserine" evidence="2">
    <location>
        <position position="312"/>
    </location>
</feature>
<feature type="modified residue" description="Phosphoserine" evidence="2">
    <location>
        <position position="642"/>
    </location>
</feature>
<sequence>MLNMWKVRELVDKATNVVMNYSEIESKVREATNDDPWGPSGQLMGEIAKATFMYEQFPELMNMLWSRMLKDNKKNWRRVYKSLLLLAYLIRNGSERVVTSAREHIYDLRSLENYHFVDEHGKDQGINIRQKVKELVEFAQDDDRLREERKKAKKNKDKYVGVSSDSVGGFRYSERYDPEPKSKWDEEWDKNKSAFPFSDKLGELSDKIGSTIDDTISKFRRKDREDSPERCSDSDEEKKARRGRSPKGEFKDEEETVTTKHIHITQATETTTTRHKRTANPSKTIDLGAAAHYTGDKASPDQNASTHTPQSSLKTSVPSSKSSGDLVDLFDGTSQSTGGSADLFGGFADFGSAAASGNFPSQVTATSGNGDFGDWSAFNQAPSVPVAASGELFGSASQPAVELVSSSQPALGPPPAASNSSDLFDLMGSSQATMTSSQSMNFSMMSTNTVGLGLPMSRSQPLQNVSTVLQKPNPLYNQNTDMVQKSVSKTLPSTWSDPSVNISLDNLLPGMQPSKPQQPSLNTMIQQQNMQQPMNMMTQSFGAVNLSSPSNMLPVRPQTNPLMGGPMPMSMPNVMTGTMGMAPLGNSPMMNQSMMGMNMNIGMSTTGMGLTGTMGMGMPNLAMTSGTMQPKQDAFANFANFSK</sequence>